<proteinExistence type="inferred from homology"/>
<protein>
    <recommendedName>
        <fullName evidence="1">Bifunctional protein FolD</fullName>
    </recommendedName>
    <domain>
        <recommendedName>
            <fullName evidence="1">Methylenetetrahydrofolate dehydrogenase</fullName>
            <ecNumber evidence="1">1.5.1.5</ecNumber>
        </recommendedName>
    </domain>
    <domain>
        <recommendedName>
            <fullName evidence="1">Methenyltetrahydrofolate cyclohydrolase</fullName>
            <ecNumber evidence="1">3.5.4.9</ecNumber>
        </recommendedName>
    </domain>
</protein>
<accession>Q5F5D0</accession>
<gene>
    <name evidence="1" type="primary">folD</name>
    <name type="ordered locus">NGO_1999</name>
</gene>
<feature type="chain" id="PRO_0000268414" description="Bifunctional protein FolD">
    <location>
        <begin position="1"/>
        <end position="284"/>
    </location>
</feature>
<feature type="binding site" evidence="1">
    <location>
        <begin position="166"/>
        <end position="168"/>
    </location>
    <ligand>
        <name>NADP(+)</name>
        <dbReference type="ChEBI" id="CHEBI:58349"/>
    </ligand>
</feature>
<feature type="binding site" evidence="1">
    <location>
        <position position="191"/>
    </location>
    <ligand>
        <name>NADP(+)</name>
        <dbReference type="ChEBI" id="CHEBI:58349"/>
    </ligand>
</feature>
<feature type="binding site" evidence="1">
    <location>
        <position position="232"/>
    </location>
    <ligand>
        <name>NADP(+)</name>
        <dbReference type="ChEBI" id="CHEBI:58349"/>
    </ligand>
</feature>
<name>FOLD_NEIG1</name>
<keyword id="KW-0028">Amino-acid biosynthesis</keyword>
<keyword id="KW-0368">Histidine biosynthesis</keyword>
<keyword id="KW-0378">Hydrolase</keyword>
<keyword id="KW-0486">Methionine biosynthesis</keyword>
<keyword id="KW-0511">Multifunctional enzyme</keyword>
<keyword id="KW-0521">NADP</keyword>
<keyword id="KW-0554">One-carbon metabolism</keyword>
<keyword id="KW-0560">Oxidoreductase</keyword>
<keyword id="KW-0658">Purine biosynthesis</keyword>
<keyword id="KW-1185">Reference proteome</keyword>
<evidence type="ECO:0000255" key="1">
    <source>
        <dbReference type="HAMAP-Rule" id="MF_01576"/>
    </source>
</evidence>
<comment type="function">
    <text evidence="1">Catalyzes the oxidation of 5,10-methylenetetrahydrofolate to 5,10-methenyltetrahydrofolate and then the hydrolysis of 5,10-methenyltetrahydrofolate to 10-formyltetrahydrofolate.</text>
</comment>
<comment type="catalytic activity">
    <reaction evidence="1">
        <text>(6R)-5,10-methylene-5,6,7,8-tetrahydrofolate + NADP(+) = (6R)-5,10-methenyltetrahydrofolate + NADPH</text>
        <dbReference type="Rhea" id="RHEA:22812"/>
        <dbReference type="ChEBI" id="CHEBI:15636"/>
        <dbReference type="ChEBI" id="CHEBI:57455"/>
        <dbReference type="ChEBI" id="CHEBI:57783"/>
        <dbReference type="ChEBI" id="CHEBI:58349"/>
        <dbReference type="EC" id="1.5.1.5"/>
    </reaction>
</comment>
<comment type="catalytic activity">
    <reaction evidence="1">
        <text>(6R)-5,10-methenyltetrahydrofolate + H2O = (6R)-10-formyltetrahydrofolate + H(+)</text>
        <dbReference type="Rhea" id="RHEA:23700"/>
        <dbReference type="ChEBI" id="CHEBI:15377"/>
        <dbReference type="ChEBI" id="CHEBI:15378"/>
        <dbReference type="ChEBI" id="CHEBI:57455"/>
        <dbReference type="ChEBI" id="CHEBI:195366"/>
        <dbReference type="EC" id="3.5.4.9"/>
    </reaction>
</comment>
<comment type="pathway">
    <text evidence="1">One-carbon metabolism; tetrahydrofolate interconversion.</text>
</comment>
<comment type="subunit">
    <text evidence="1">Homodimer.</text>
</comment>
<comment type="similarity">
    <text evidence="1">Belongs to the tetrahydrofolate dehydrogenase/cyclohydrolase family.</text>
</comment>
<dbReference type="EC" id="1.5.1.5" evidence="1"/>
<dbReference type="EC" id="3.5.4.9" evidence="1"/>
<dbReference type="EMBL" id="AE004969">
    <property type="protein sequence ID" value="AAW90607.1"/>
    <property type="molecule type" value="Genomic_DNA"/>
</dbReference>
<dbReference type="RefSeq" id="WP_003686899.1">
    <property type="nucleotide sequence ID" value="NC_002946.2"/>
</dbReference>
<dbReference type="RefSeq" id="YP_209019.1">
    <property type="nucleotide sequence ID" value="NC_002946.2"/>
</dbReference>
<dbReference type="SMR" id="Q5F5D0"/>
<dbReference type="STRING" id="242231.NGO_1999"/>
<dbReference type="GeneID" id="66754115"/>
<dbReference type="KEGG" id="ngo:NGO_1999"/>
<dbReference type="PATRIC" id="fig|242231.10.peg.2410"/>
<dbReference type="HOGENOM" id="CLU_034045_2_1_4"/>
<dbReference type="UniPathway" id="UPA00193"/>
<dbReference type="Proteomes" id="UP000000535">
    <property type="component" value="Chromosome"/>
</dbReference>
<dbReference type="GO" id="GO:0005829">
    <property type="term" value="C:cytosol"/>
    <property type="evidence" value="ECO:0007669"/>
    <property type="project" value="TreeGrafter"/>
</dbReference>
<dbReference type="GO" id="GO:0004477">
    <property type="term" value="F:methenyltetrahydrofolate cyclohydrolase activity"/>
    <property type="evidence" value="ECO:0007669"/>
    <property type="project" value="UniProtKB-UniRule"/>
</dbReference>
<dbReference type="GO" id="GO:0004488">
    <property type="term" value="F:methylenetetrahydrofolate dehydrogenase (NADP+) activity"/>
    <property type="evidence" value="ECO:0007669"/>
    <property type="project" value="UniProtKB-UniRule"/>
</dbReference>
<dbReference type="GO" id="GO:0000105">
    <property type="term" value="P:L-histidine biosynthetic process"/>
    <property type="evidence" value="ECO:0007669"/>
    <property type="project" value="UniProtKB-KW"/>
</dbReference>
<dbReference type="GO" id="GO:0009086">
    <property type="term" value="P:methionine biosynthetic process"/>
    <property type="evidence" value="ECO:0007669"/>
    <property type="project" value="UniProtKB-KW"/>
</dbReference>
<dbReference type="GO" id="GO:0006164">
    <property type="term" value="P:purine nucleotide biosynthetic process"/>
    <property type="evidence" value="ECO:0007669"/>
    <property type="project" value="UniProtKB-KW"/>
</dbReference>
<dbReference type="GO" id="GO:0035999">
    <property type="term" value="P:tetrahydrofolate interconversion"/>
    <property type="evidence" value="ECO:0007669"/>
    <property type="project" value="UniProtKB-UniRule"/>
</dbReference>
<dbReference type="CDD" id="cd01080">
    <property type="entry name" value="NAD_bind_m-THF_DH_Cyclohyd"/>
    <property type="match status" value="1"/>
</dbReference>
<dbReference type="FunFam" id="3.40.50.10860:FF:000001">
    <property type="entry name" value="Bifunctional protein FolD"/>
    <property type="match status" value="1"/>
</dbReference>
<dbReference type="FunFam" id="3.40.50.720:FF:000006">
    <property type="entry name" value="Bifunctional protein FolD"/>
    <property type="match status" value="1"/>
</dbReference>
<dbReference type="Gene3D" id="3.40.50.10860">
    <property type="entry name" value="Leucine Dehydrogenase, chain A, domain 1"/>
    <property type="match status" value="1"/>
</dbReference>
<dbReference type="Gene3D" id="3.40.50.720">
    <property type="entry name" value="NAD(P)-binding Rossmann-like Domain"/>
    <property type="match status" value="1"/>
</dbReference>
<dbReference type="HAMAP" id="MF_01576">
    <property type="entry name" value="THF_DHG_CYH"/>
    <property type="match status" value="1"/>
</dbReference>
<dbReference type="InterPro" id="IPR046346">
    <property type="entry name" value="Aminoacid_DH-like_N_sf"/>
</dbReference>
<dbReference type="InterPro" id="IPR036291">
    <property type="entry name" value="NAD(P)-bd_dom_sf"/>
</dbReference>
<dbReference type="InterPro" id="IPR000672">
    <property type="entry name" value="THF_DH/CycHdrlase"/>
</dbReference>
<dbReference type="InterPro" id="IPR020630">
    <property type="entry name" value="THF_DH/CycHdrlase_cat_dom"/>
</dbReference>
<dbReference type="InterPro" id="IPR020867">
    <property type="entry name" value="THF_DH/CycHdrlase_CS"/>
</dbReference>
<dbReference type="InterPro" id="IPR020631">
    <property type="entry name" value="THF_DH/CycHdrlase_NAD-bd_dom"/>
</dbReference>
<dbReference type="NCBIfam" id="NF008058">
    <property type="entry name" value="PRK10792.1"/>
    <property type="match status" value="1"/>
</dbReference>
<dbReference type="NCBIfam" id="NF010783">
    <property type="entry name" value="PRK14186.1"/>
    <property type="match status" value="1"/>
</dbReference>
<dbReference type="PANTHER" id="PTHR48099:SF5">
    <property type="entry name" value="C-1-TETRAHYDROFOLATE SYNTHASE, CYTOPLASMIC"/>
    <property type="match status" value="1"/>
</dbReference>
<dbReference type="PANTHER" id="PTHR48099">
    <property type="entry name" value="C-1-TETRAHYDROFOLATE SYNTHASE, CYTOPLASMIC-RELATED"/>
    <property type="match status" value="1"/>
</dbReference>
<dbReference type="Pfam" id="PF00763">
    <property type="entry name" value="THF_DHG_CYH"/>
    <property type="match status" value="1"/>
</dbReference>
<dbReference type="Pfam" id="PF02882">
    <property type="entry name" value="THF_DHG_CYH_C"/>
    <property type="match status" value="1"/>
</dbReference>
<dbReference type="PRINTS" id="PR00085">
    <property type="entry name" value="THFDHDRGNASE"/>
</dbReference>
<dbReference type="SUPFAM" id="SSF53223">
    <property type="entry name" value="Aminoacid dehydrogenase-like, N-terminal domain"/>
    <property type="match status" value="1"/>
</dbReference>
<dbReference type="SUPFAM" id="SSF51735">
    <property type="entry name" value="NAD(P)-binding Rossmann-fold domains"/>
    <property type="match status" value="1"/>
</dbReference>
<dbReference type="PROSITE" id="PS00766">
    <property type="entry name" value="THF_DHG_CYH_1"/>
    <property type="match status" value="1"/>
</dbReference>
<dbReference type="PROSITE" id="PS00767">
    <property type="entry name" value="THF_DHG_CYH_2"/>
    <property type="match status" value="1"/>
</dbReference>
<reference key="1">
    <citation type="submission" date="2003-03" db="EMBL/GenBank/DDBJ databases">
        <title>The complete genome sequence of Neisseria gonorrhoeae.</title>
        <authorList>
            <person name="Lewis L.A."/>
            <person name="Gillaspy A.F."/>
            <person name="McLaughlin R.E."/>
            <person name="Gipson M."/>
            <person name="Ducey T.F."/>
            <person name="Ownbey T."/>
            <person name="Hartman K."/>
            <person name="Nydick C."/>
            <person name="Carson M.B."/>
            <person name="Vaughn J."/>
            <person name="Thomson C."/>
            <person name="Song L."/>
            <person name="Lin S."/>
            <person name="Yuan X."/>
            <person name="Najar F."/>
            <person name="Zhan M."/>
            <person name="Ren Q."/>
            <person name="Zhu H."/>
            <person name="Qi S."/>
            <person name="Kenton S.M."/>
            <person name="Lai H."/>
            <person name="White J.D."/>
            <person name="Clifton S."/>
            <person name="Roe B.A."/>
            <person name="Dyer D.W."/>
        </authorList>
    </citation>
    <scope>NUCLEOTIDE SEQUENCE [LARGE SCALE GENOMIC DNA]</scope>
    <source>
        <strain>ATCC 700825 / FA 1090</strain>
    </source>
</reference>
<organism>
    <name type="scientific">Neisseria gonorrhoeae (strain ATCC 700825 / FA 1090)</name>
    <dbReference type="NCBI Taxonomy" id="242231"/>
    <lineage>
        <taxon>Bacteria</taxon>
        <taxon>Pseudomonadati</taxon>
        <taxon>Pseudomonadota</taxon>
        <taxon>Betaproteobacteria</taxon>
        <taxon>Neisseriales</taxon>
        <taxon>Neisseriaceae</taxon>
        <taxon>Neisseria</taxon>
    </lineage>
</organism>
<sequence>MSAQLINGKEVSQKHLQAIAEAVAQRQQDNLHTPCLAVVLVGGDPAGAVYVRNKKTACQKCGIKSLSYELPESTSQEELLALVDRLNADSEVDGILVQLPLPKHLDSQAILERISPDKDVDGFHPYNVGRLAVKMPLMRPCTPKGVMTLLEAYGIDPKGKKAVVVGASNIVGRPQALELLLARATVTVCHSATENLADEVAAADILVVGVGIPNFVKGGWIKPGAVVIDVGINRLDDGSLCGDVEFETAKERAAMITPVPGGVGPMTIATLMENTLHAASLHDA</sequence>